<geneLocation type="chloroplast"/>
<dbReference type="EC" id="1.97.1.12" evidence="2"/>
<dbReference type="EMBL" id="AB237912">
    <property type="protein sequence ID" value="BAE46715.1"/>
    <property type="molecule type" value="Genomic_DNA"/>
</dbReference>
<dbReference type="RefSeq" id="YP_358738.1">
    <property type="nucleotide sequence ID" value="NC_007500.1"/>
</dbReference>
<dbReference type="SMR" id="Q3C1Q3"/>
<dbReference type="GeneID" id="3735098"/>
<dbReference type="KEGG" id="nsy:3735098"/>
<dbReference type="OrthoDB" id="17053at4085"/>
<dbReference type="Proteomes" id="UP000189701">
    <property type="component" value="Chloroplast Pltd"/>
</dbReference>
<dbReference type="GO" id="GO:0009535">
    <property type="term" value="C:chloroplast thylakoid membrane"/>
    <property type="evidence" value="ECO:0007669"/>
    <property type="project" value="UniProtKB-SubCell"/>
</dbReference>
<dbReference type="GO" id="GO:0009522">
    <property type="term" value="C:photosystem I"/>
    <property type="evidence" value="ECO:0007669"/>
    <property type="project" value="UniProtKB-KW"/>
</dbReference>
<dbReference type="GO" id="GO:0051539">
    <property type="term" value="F:4 iron, 4 sulfur cluster binding"/>
    <property type="evidence" value="ECO:0007669"/>
    <property type="project" value="UniProtKB-KW"/>
</dbReference>
<dbReference type="GO" id="GO:0009055">
    <property type="term" value="F:electron transfer activity"/>
    <property type="evidence" value="ECO:0007669"/>
    <property type="project" value="UniProtKB-UniRule"/>
</dbReference>
<dbReference type="GO" id="GO:0046872">
    <property type="term" value="F:metal ion binding"/>
    <property type="evidence" value="ECO:0007669"/>
    <property type="project" value="UniProtKB-KW"/>
</dbReference>
<dbReference type="GO" id="GO:0016491">
    <property type="term" value="F:oxidoreductase activity"/>
    <property type="evidence" value="ECO:0007669"/>
    <property type="project" value="UniProtKB-KW"/>
</dbReference>
<dbReference type="GO" id="GO:0009773">
    <property type="term" value="P:photosynthetic electron transport in photosystem I"/>
    <property type="evidence" value="ECO:0007669"/>
    <property type="project" value="InterPro"/>
</dbReference>
<dbReference type="FunFam" id="3.30.70.20:FF:000001">
    <property type="entry name" value="Photosystem I iron-sulfur center"/>
    <property type="match status" value="1"/>
</dbReference>
<dbReference type="Gene3D" id="3.30.70.20">
    <property type="match status" value="1"/>
</dbReference>
<dbReference type="HAMAP" id="MF_01303">
    <property type="entry name" value="PSI_PsaC"/>
    <property type="match status" value="1"/>
</dbReference>
<dbReference type="InterPro" id="IPR017896">
    <property type="entry name" value="4Fe4S_Fe-S-bd"/>
</dbReference>
<dbReference type="InterPro" id="IPR017900">
    <property type="entry name" value="4Fe4S_Fe_S_CS"/>
</dbReference>
<dbReference type="InterPro" id="IPR050157">
    <property type="entry name" value="PSI_iron-sulfur_center"/>
</dbReference>
<dbReference type="InterPro" id="IPR017491">
    <property type="entry name" value="PSI_PsaC"/>
</dbReference>
<dbReference type="NCBIfam" id="TIGR03048">
    <property type="entry name" value="PS_I_psaC"/>
    <property type="match status" value="1"/>
</dbReference>
<dbReference type="PANTHER" id="PTHR24960:SF79">
    <property type="entry name" value="PHOTOSYSTEM I IRON-SULFUR CENTER"/>
    <property type="match status" value="1"/>
</dbReference>
<dbReference type="PANTHER" id="PTHR24960">
    <property type="entry name" value="PHOTOSYSTEM I IRON-SULFUR CENTER-RELATED"/>
    <property type="match status" value="1"/>
</dbReference>
<dbReference type="Pfam" id="PF14697">
    <property type="entry name" value="Fer4_21"/>
    <property type="match status" value="1"/>
</dbReference>
<dbReference type="SUPFAM" id="SSF54862">
    <property type="entry name" value="4Fe-4S ferredoxins"/>
    <property type="match status" value="1"/>
</dbReference>
<dbReference type="PROSITE" id="PS00198">
    <property type="entry name" value="4FE4S_FER_1"/>
    <property type="match status" value="2"/>
</dbReference>
<dbReference type="PROSITE" id="PS51379">
    <property type="entry name" value="4FE4S_FER_2"/>
    <property type="match status" value="2"/>
</dbReference>
<evidence type="ECO:0000250" key="1"/>
<evidence type="ECO:0000255" key="2">
    <source>
        <dbReference type="HAMAP-Rule" id="MF_01303"/>
    </source>
</evidence>
<protein>
    <recommendedName>
        <fullName evidence="2">Photosystem I iron-sulfur center</fullName>
        <ecNumber evidence="2">1.97.1.12</ecNumber>
    </recommendedName>
    <alternativeName>
        <fullName evidence="2">9 kDa polypeptide</fullName>
    </alternativeName>
    <alternativeName>
        <fullName evidence="2">PSI-C</fullName>
    </alternativeName>
    <alternativeName>
        <fullName evidence="2">Photosystem I subunit VII</fullName>
    </alternativeName>
    <alternativeName>
        <fullName evidence="2">PsaC</fullName>
    </alternativeName>
</protein>
<proteinExistence type="inferred from homology"/>
<name>PSAC_NICSY</name>
<keyword id="KW-0004">4Fe-4S</keyword>
<keyword id="KW-0150">Chloroplast</keyword>
<keyword id="KW-0249">Electron transport</keyword>
<keyword id="KW-0408">Iron</keyword>
<keyword id="KW-0411">Iron-sulfur</keyword>
<keyword id="KW-0472">Membrane</keyword>
<keyword id="KW-0479">Metal-binding</keyword>
<keyword id="KW-0560">Oxidoreductase</keyword>
<keyword id="KW-0602">Photosynthesis</keyword>
<keyword id="KW-0603">Photosystem I</keyword>
<keyword id="KW-0934">Plastid</keyword>
<keyword id="KW-1185">Reference proteome</keyword>
<keyword id="KW-0677">Repeat</keyword>
<keyword id="KW-0793">Thylakoid</keyword>
<keyword id="KW-0813">Transport</keyword>
<sequence>MSHSVKIYDTCIGCTQCVRACPTDVLEMIPWDGCKAKQIASAPRTEDCVGCKRCESACPTDFLSVRVYLWHETTRSMGLAY</sequence>
<reference key="1">
    <citation type="journal article" date="2006" name="Mol. Genet. Genomics">
        <title>The chloroplast genome of Nicotiana sylvestris and Nicotiana tomentosiformis: complete sequencing confirms that the Nicotiana sylvestris progenitor is the maternal genome donor of Nicotiana tabacum.</title>
        <authorList>
            <person name="Yukawa M."/>
            <person name="Tsudzuki T."/>
            <person name="Sugiura M."/>
        </authorList>
    </citation>
    <scope>NUCLEOTIDE SEQUENCE [LARGE SCALE GENOMIC DNA]</scope>
</reference>
<accession>Q3C1Q3</accession>
<organism>
    <name type="scientific">Nicotiana sylvestris</name>
    <name type="common">Wood tobacco</name>
    <name type="synonym">South American tobacco</name>
    <dbReference type="NCBI Taxonomy" id="4096"/>
    <lineage>
        <taxon>Eukaryota</taxon>
        <taxon>Viridiplantae</taxon>
        <taxon>Streptophyta</taxon>
        <taxon>Embryophyta</taxon>
        <taxon>Tracheophyta</taxon>
        <taxon>Spermatophyta</taxon>
        <taxon>Magnoliopsida</taxon>
        <taxon>eudicotyledons</taxon>
        <taxon>Gunneridae</taxon>
        <taxon>Pentapetalae</taxon>
        <taxon>asterids</taxon>
        <taxon>lamiids</taxon>
        <taxon>Solanales</taxon>
        <taxon>Solanaceae</taxon>
        <taxon>Nicotianoideae</taxon>
        <taxon>Nicotianeae</taxon>
        <taxon>Nicotiana</taxon>
    </lineage>
</organism>
<feature type="initiator methionine" description="Removed" evidence="1">
    <location>
        <position position="1"/>
    </location>
</feature>
<feature type="chain" id="PRO_0000275989" description="Photosystem I iron-sulfur center">
    <location>
        <begin position="2"/>
        <end position="81"/>
    </location>
</feature>
<feature type="domain" description="4Fe-4S ferredoxin-type 1" evidence="2">
    <location>
        <begin position="2"/>
        <end position="31"/>
    </location>
</feature>
<feature type="domain" description="4Fe-4S ferredoxin-type 2" evidence="2">
    <location>
        <begin position="39"/>
        <end position="68"/>
    </location>
</feature>
<feature type="binding site" evidence="2">
    <location>
        <position position="11"/>
    </location>
    <ligand>
        <name>[4Fe-4S] cluster</name>
        <dbReference type="ChEBI" id="CHEBI:49883"/>
        <label>1</label>
    </ligand>
</feature>
<feature type="binding site" evidence="2">
    <location>
        <position position="14"/>
    </location>
    <ligand>
        <name>[4Fe-4S] cluster</name>
        <dbReference type="ChEBI" id="CHEBI:49883"/>
        <label>1</label>
    </ligand>
</feature>
<feature type="binding site" evidence="2">
    <location>
        <position position="17"/>
    </location>
    <ligand>
        <name>[4Fe-4S] cluster</name>
        <dbReference type="ChEBI" id="CHEBI:49883"/>
        <label>1</label>
    </ligand>
</feature>
<feature type="binding site" evidence="2">
    <location>
        <position position="21"/>
    </location>
    <ligand>
        <name>[4Fe-4S] cluster</name>
        <dbReference type="ChEBI" id="CHEBI:49883"/>
        <label>2</label>
    </ligand>
</feature>
<feature type="binding site" evidence="2">
    <location>
        <position position="48"/>
    </location>
    <ligand>
        <name>[4Fe-4S] cluster</name>
        <dbReference type="ChEBI" id="CHEBI:49883"/>
        <label>2</label>
    </ligand>
</feature>
<feature type="binding site" evidence="2">
    <location>
        <position position="51"/>
    </location>
    <ligand>
        <name>[4Fe-4S] cluster</name>
        <dbReference type="ChEBI" id="CHEBI:49883"/>
        <label>2</label>
    </ligand>
</feature>
<feature type="binding site" evidence="2">
    <location>
        <position position="54"/>
    </location>
    <ligand>
        <name>[4Fe-4S] cluster</name>
        <dbReference type="ChEBI" id="CHEBI:49883"/>
        <label>2</label>
    </ligand>
</feature>
<feature type="binding site" evidence="2">
    <location>
        <position position="58"/>
    </location>
    <ligand>
        <name>[4Fe-4S] cluster</name>
        <dbReference type="ChEBI" id="CHEBI:49883"/>
        <label>1</label>
    </ligand>
</feature>
<comment type="function">
    <text evidence="2">Apoprotein for the two 4Fe-4S centers FA and FB of photosystem I (PSI); essential for photochemical activity. FB is the terminal electron acceptor of PSI, donating electrons to ferredoxin. The C-terminus interacts with PsaA/B/D and helps assemble the protein into the PSI complex. Required for binding of PsaD and PsaE to PSI. PSI is a plastocyanin-ferredoxin oxidoreductase, converting photonic excitation into a charge separation, which transfers an electron from the donor P700 chlorophyll pair to the spectroscopically characterized acceptors A0, A1, FX, FA and FB in turn.</text>
</comment>
<comment type="catalytic activity">
    <reaction evidence="2">
        <text>reduced [plastocyanin] + hnu + oxidized [2Fe-2S]-[ferredoxin] = oxidized [plastocyanin] + reduced [2Fe-2S]-[ferredoxin]</text>
        <dbReference type="Rhea" id="RHEA:30407"/>
        <dbReference type="Rhea" id="RHEA-COMP:10000"/>
        <dbReference type="Rhea" id="RHEA-COMP:10001"/>
        <dbReference type="Rhea" id="RHEA-COMP:10039"/>
        <dbReference type="Rhea" id="RHEA-COMP:10040"/>
        <dbReference type="ChEBI" id="CHEBI:29036"/>
        <dbReference type="ChEBI" id="CHEBI:30212"/>
        <dbReference type="ChEBI" id="CHEBI:33737"/>
        <dbReference type="ChEBI" id="CHEBI:33738"/>
        <dbReference type="ChEBI" id="CHEBI:49552"/>
        <dbReference type="EC" id="1.97.1.12"/>
    </reaction>
</comment>
<comment type="cofactor">
    <cofactor evidence="2">
        <name>[4Fe-4S] cluster</name>
        <dbReference type="ChEBI" id="CHEBI:49883"/>
    </cofactor>
    <text evidence="2">Binds 2 [4Fe-4S] clusters. Cluster 2 is most probably the spectroscopically characterized electron acceptor FA and cluster 1 is most probably FB.</text>
</comment>
<comment type="subunit">
    <text evidence="2">The eukaryotic PSI reaction center is composed of at least 11 subunits.</text>
</comment>
<comment type="subcellular location">
    <subcellularLocation>
        <location evidence="2">Plastid</location>
        <location evidence="2">Chloroplast thylakoid membrane</location>
        <topology evidence="2">Peripheral membrane protein</topology>
        <orientation evidence="2">Stromal side</orientation>
    </subcellularLocation>
</comment>
<gene>
    <name evidence="2" type="primary">psaC</name>
</gene>